<keyword id="KW-0002">3D-structure</keyword>
<keyword id="KW-0235">DNA replication</keyword>
<keyword id="KW-0238">DNA-binding</keyword>
<keyword id="KW-0240">DNA-directed RNA polymerase</keyword>
<keyword id="KW-0460">Magnesium</keyword>
<keyword id="KW-0479">Metal-binding</keyword>
<keyword id="KW-0548">Nucleotidyltransferase</keyword>
<keyword id="KW-0639">Primosome</keyword>
<keyword id="KW-1185">Reference proteome</keyword>
<keyword id="KW-0804">Transcription</keyword>
<keyword id="KW-0808">Transferase</keyword>
<keyword id="KW-0862">Zinc</keyword>
<keyword id="KW-0863">Zinc-finger</keyword>
<proteinExistence type="evidence at protein level"/>
<comment type="function">
    <text evidence="1 2 3">RNA polymerase that catalyzes the synthesis of short RNA molecules used as primers for DNA polymerase during DNA replication. Stimulates the 5'-3' DNA helicase activity of DnaB (PubMed:23585534, PubMed:26264665).</text>
</comment>
<comment type="catalytic activity">
    <reaction evidence="1">
        <text>ssDNA + n NTP = ssDNA/pppN(pN)n-1 hybrid + (n-1) diphosphate.</text>
        <dbReference type="EC" id="2.7.7.101"/>
    </reaction>
</comment>
<comment type="cofactor">
    <cofactor evidence="1">
        <name>Zn(2+)</name>
        <dbReference type="ChEBI" id="CHEBI:29105"/>
    </cofactor>
    <text evidence="1">Binds 1 zinc ion per monomer.</text>
</comment>
<comment type="cofactor">
    <cofactor evidence="1">
        <name>Mg(2+)</name>
        <dbReference type="ChEBI" id="CHEBI:18420"/>
    </cofactor>
    <text evidence="1">Binds two Mg(2+) per subunit.</text>
</comment>
<comment type="subunit">
    <text evidence="1 2 3">Monomer (By similarity). The C-terminal domain DnaB-binding domain exists as a dimer in solution (PubMed:23585534, PubMed:26264665). Interacts with DnaB via its C-terminal domain (residues 415-559 of DnaG); up to 3 DnaG fragments bind to a DnaB hexamer (PubMed:26264665).</text>
</comment>
<comment type="domain">
    <text evidence="1">Contains an N-terminal zinc-binding domain, a central core domain that contains the primase activity, and a C-terminal DnaB-binding domain.</text>
</comment>
<comment type="similarity">
    <text evidence="1">Belongs to the DnaG primase family.</text>
</comment>
<feature type="chain" id="PRO_0000180495" description="DNA primase">
    <location>
        <begin position="1"/>
        <end position="559"/>
    </location>
</feature>
<feature type="domain" description="Toprim" evidence="1">
    <location>
        <begin position="246"/>
        <end position="327"/>
    </location>
</feature>
<feature type="zinc finger region" description="CHC2-type" evidence="1">
    <location>
        <begin position="37"/>
        <end position="61"/>
    </location>
</feature>
<feature type="binding site" evidence="1">
    <location>
        <position position="252"/>
    </location>
    <ligand>
        <name>Mg(2+)</name>
        <dbReference type="ChEBI" id="CHEBI:18420"/>
        <label>1</label>
        <note>catalytic</note>
    </ligand>
</feature>
<feature type="binding site" evidence="1">
    <location>
        <position position="296"/>
    </location>
    <ligand>
        <name>Mg(2+)</name>
        <dbReference type="ChEBI" id="CHEBI:18420"/>
        <label>1</label>
        <note>catalytic</note>
    </ligand>
</feature>
<feature type="binding site" evidence="1">
    <location>
        <position position="296"/>
    </location>
    <ligand>
        <name>Mg(2+)</name>
        <dbReference type="ChEBI" id="CHEBI:18420"/>
        <label>2</label>
    </ligand>
</feature>
<feature type="binding site" evidence="1">
    <location>
        <position position="298"/>
    </location>
    <ligand>
        <name>Mg(2+)</name>
        <dbReference type="ChEBI" id="CHEBI:18420"/>
        <label>2</label>
    </ligand>
</feature>
<feature type="mutagenesis site" description="Decreased binding of C-terminal fragment to DnaB, decreased stimulation of DnaB 5'-3' DNA helicase and ATPase activities." evidence="2">
    <original>F</original>
    <variation>A</variation>
    <location>
        <position position="534"/>
    </location>
</feature>
<feature type="helix" evidence="5">
    <location>
        <begin position="442"/>
        <end position="455"/>
    </location>
</feature>
<feature type="helix" evidence="5">
    <location>
        <begin position="457"/>
        <end position="463"/>
    </location>
</feature>
<feature type="turn" evidence="5">
    <location>
        <begin position="464"/>
        <end position="466"/>
    </location>
</feature>
<feature type="helix" evidence="5">
    <location>
        <begin position="469"/>
        <end position="471"/>
    </location>
</feature>
<feature type="helix" evidence="5">
    <location>
        <begin position="476"/>
        <end position="483"/>
    </location>
</feature>
<feature type="helix" evidence="5">
    <location>
        <begin position="490"/>
        <end position="497"/>
    </location>
</feature>
<feature type="helix" evidence="5">
    <location>
        <begin position="508"/>
        <end position="529"/>
    </location>
</feature>
<feature type="helix" evidence="5">
    <location>
        <begin position="534"/>
        <end position="552"/>
    </location>
</feature>
<organism>
    <name type="scientific">Helicobacter pylori (strain ATCC 700392 / 26695)</name>
    <name type="common">Campylobacter pylori</name>
    <dbReference type="NCBI Taxonomy" id="85962"/>
    <lineage>
        <taxon>Bacteria</taxon>
        <taxon>Pseudomonadati</taxon>
        <taxon>Campylobacterota</taxon>
        <taxon>Epsilonproteobacteria</taxon>
        <taxon>Campylobacterales</taxon>
        <taxon>Helicobacteraceae</taxon>
        <taxon>Helicobacter</taxon>
    </lineage>
</organism>
<gene>
    <name evidence="1" type="primary">dnaG</name>
    <name type="ordered locus">HP_0012</name>
</gene>
<name>DNAG_HELPY</name>
<accession>P56064</accession>
<dbReference type="EC" id="2.7.7.101" evidence="1"/>
<dbReference type="EMBL" id="AE000511">
    <property type="protein sequence ID" value="AAD07082.1"/>
    <property type="molecule type" value="Genomic_DNA"/>
</dbReference>
<dbReference type="PIR" id="D64521">
    <property type="entry name" value="D64521"/>
</dbReference>
<dbReference type="RefSeq" id="NP_206814.1">
    <property type="nucleotide sequence ID" value="NC_000915.1"/>
</dbReference>
<dbReference type="RefSeq" id="WP_000601638.1">
    <property type="nucleotide sequence ID" value="NC_018939.1"/>
</dbReference>
<dbReference type="PDB" id="4EHS">
    <property type="method" value="X-ray"/>
    <property type="resolution" value="1.78 A"/>
    <property type="chains" value="A/B=413-559"/>
</dbReference>
<dbReference type="PDBsum" id="4EHS"/>
<dbReference type="SMR" id="P56064"/>
<dbReference type="DIP" id="DIP-3301N"/>
<dbReference type="FunCoup" id="P56064">
    <property type="interactions" value="193"/>
</dbReference>
<dbReference type="IntAct" id="P56064">
    <property type="interactions" value="9"/>
</dbReference>
<dbReference type="MINT" id="P56064"/>
<dbReference type="STRING" id="85962.HP_0012"/>
<dbReference type="PaxDb" id="85962-C694_00055"/>
<dbReference type="EnsemblBacteria" id="AAD07082">
    <property type="protein sequence ID" value="AAD07082"/>
    <property type="gene ID" value="HP_0012"/>
</dbReference>
<dbReference type="KEGG" id="heo:C694_00055"/>
<dbReference type="KEGG" id="hpy:HP_0012"/>
<dbReference type="PATRIC" id="fig|85962.47.peg.11"/>
<dbReference type="eggNOG" id="COG0358">
    <property type="taxonomic scope" value="Bacteria"/>
</dbReference>
<dbReference type="InParanoid" id="P56064"/>
<dbReference type="OrthoDB" id="9803773at2"/>
<dbReference type="PhylomeDB" id="P56064"/>
<dbReference type="BRENDA" id="2.7.7.101">
    <property type="organism ID" value="2604"/>
</dbReference>
<dbReference type="EvolutionaryTrace" id="P56064"/>
<dbReference type="Proteomes" id="UP000000429">
    <property type="component" value="Chromosome"/>
</dbReference>
<dbReference type="GO" id="GO:0005737">
    <property type="term" value="C:cytoplasm"/>
    <property type="evidence" value="ECO:0000318"/>
    <property type="project" value="GO_Central"/>
</dbReference>
<dbReference type="GO" id="GO:0000428">
    <property type="term" value="C:DNA-directed RNA polymerase complex"/>
    <property type="evidence" value="ECO:0007669"/>
    <property type="project" value="UniProtKB-KW"/>
</dbReference>
<dbReference type="GO" id="GO:1990077">
    <property type="term" value="C:primosome complex"/>
    <property type="evidence" value="ECO:0007669"/>
    <property type="project" value="UniProtKB-KW"/>
</dbReference>
<dbReference type="GO" id="GO:0003677">
    <property type="term" value="F:DNA binding"/>
    <property type="evidence" value="ECO:0007669"/>
    <property type="project" value="UniProtKB-KW"/>
</dbReference>
<dbReference type="GO" id="GO:0003899">
    <property type="term" value="F:DNA-directed RNA polymerase activity"/>
    <property type="evidence" value="ECO:0007669"/>
    <property type="project" value="InterPro"/>
</dbReference>
<dbReference type="GO" id="GO:0008270">
    <property type="term" value="F:zinc ion binding"/>
    <property type="evidence" value="ECO:0007669"/>
    <property type="project" value="UniProtKB-UniRule"/>
</dbReference>
<dbReference type="GO" id="GO:0006269">
    <property type="term" value="P:DNA replication, synthesis of primer"/>
    <property type="evidence" value="ECO:0000318"/>
    <property type="project" value="GO_Central"/>
</dbReference>
<dbReference type="CDD" id="cd03364">
    <property type="entry name" value="TOPRIM_DnaG_primases"/>
    <property type="match status" value="1"/>
</dbReference>
<dbReference type="FunFam" id="3.90.580.10:FF:000001">
    <property type="entry name" value="DNA primase"/>
    <property type="match status" value="1"/>
</dbReference>
<dbReference type="Gene3D" id="3.40.1360.10">
    <property type="match status" value="1"/>
</dbReference>
<dbReference type="Gene3D" id="3.90.980.10">
    <property type="entry name" value="DNA primase, catalytic core, N-terminal domain"/>
    <property type="match status" value="1"/>
</dbReference>
<dbReference type="Gene3D" id="1.10.860.10">
    <property type="entry name" value="DNAb Helicase, Chain A"/>
    <property type="match status" value="1"/>
</dbReference>
<dbReference type="Gene3D" id="3.90.580.10">
    <property type="entry name" value="Zinc finger, CHC2-type domain"/>
    <property type="match status" value="1"/>
</dbReference>
<dbReference type="HAMAP" id="MF_00974">
    <property type="entry name" value="DNA_primase_DnaG"/>
    <property type="match status" value="1"/>
</dbReference>
<dbReference type="InterPro" id="IPR016136">
    <property type="entry name" value="DNA_helicase_N/primase_C"/>
</dbReference>
<dbReference type="InterPro" id="IPR037068">
    <property type="entry name" value="DNA_primase_core_N_sf"/>
</dbReference>
<dbReference type="InterPro" id="IPR006295">
    <property type="entry name" value="DNA_primase_DnaG"/>
</dbReference>
<dbReference type="InterPro" id="IPR036977">
    <property type="entry name" value="DNA_primase_Znf_CHC2"/>
</dbReference>
<dbReference type="InterPro" id="IPR030846">
    <property type="entry name" value="DnaG_bac"/>
</dbReference>
<dbReference type="InterPro" id="IPR031988">
    <property type="entry name" value="DnaG_HBD"/>
</dbReference>
<dbReference type="InterPro" id="IPR013264">
    <property type="entry name" value="DNAG_N"/>
</dbReference>
<dbReference type="InterPro" id="IPR050219">
    <property type="entry name" value="DnaG_primase"/>
</dbReference>
<dbReference type="InterPro" id="IPR034151">
    <property type="entry name" value="TOPRIM_DnaG_bac"/>
</dbReference>
<dbReference type="InterPro" id="IPR006171">
    <property type="entry name" value="TOPRIM_dom"/>
</dbReference>
<dbReference type="InterPro" id="IPR002694">
    <property type="entry name" value="Znf_CHC2"/>
</dbReference>
<dbReference type="NCBIfam" id="TIGR01391">
    <property type="entry name" value="dnaG"/>
    <property type="match status" value="1"/>
</dbReference>
<dbReference type="PANTHER" id="PTHR30313">
    <property type="entry name" value="DNA PRIMASE"/>
    <property type="match status" value="1"/>
</dbReference>
<dbReference type="PANTHER" id="PTHR30313:SF2">
    <property type="entry name" value="DNA PRIMASE"/>
    <property type="match status" value="1"/>
</dbReference>
<dbReference type="Pfam" id="PF08275">
    <property type="entry name" value="DNAG_N"/>
    <property type="match status" value="1"/>
</dbReference>
<dbReference type="Pfam" id="PF16730">
    <property type="entry name" value="DnaGprimase_HBD"/>
    <property type="match status" value="1"/>
</dbReference>
<dbReference type="Pfam" id="PF13155">
    <property type="entry name" value="Toprim_2"/>
    <property type="match status" value="1"/>
</dbReference>
<dbReference type="Pfam" id="PF01807">
    <property type="entry name" value="Zn_ribbon_DnaG"/>
    <property type="match status" value="1"/>
</dbReference>
<dbReference type="PIRSF" id="PIRSF002811">
    <property type="entry name" value="DnaG"/>
    <property type="match status" value="1"/>
</dbReference>
<dbReference type="SMART" id="SM00493">
    <property type="entry name" value="TOPRIM"/>
    <property type="match status" value="1"/>
</dbReference>
<dbReference type="SMART" id="SM00400">
    <property type="entry name" value="ZnF_CHCC"/>
    <property type="match status" value="1"/>
</dbReference>
<dbReference type="SUPFAM" id="SSF56731">
    <property type="entry name" value="DNA primase core"/>
    <property type="match status" value="1"/>
</dbReference>
<dbReference type="SUPFAM" id="SSF57783">
    <property type="entry name" value="Zinc beta-ribbon"/>
    <property type="match status" value="1"/>
</dbReference>
<dbReference type="PROSITE" id="PS50880">
    <property type="entry name" value="TOPRIM"/>
    <property type="match status" value="1"/>
</dbReference>
<reference key="1">
    <citation type="journal article" date="1997" name="Nature">
        <title>The complete genome sequence of the gastric pathogen Helicobacter pylori.</title>
        <authorList>
            <person name="Tomb J.-F."/>
            <person name="White O."/>
            <person name="Kerlavage A.R."/>
            <person name="Clayton R.A."/>
            <person name="Sutton G.G."/>
            <person name="Fleischmann R.D."/>
            <person name="Ketchum K.A."/>
            <person name="Klenk H.-P."/>
            <person name="Gill S.R."/>
            <person name="Dougherty B.A."/>
            <person name="Nelson K.E."/>
            <person name="Quackenbush J."/>
            <person name="Zhou L."/>
            <person name="Kirkness E.F."/>
            <person name="Peterson S.N."/>
            <person name="Loftus B.J."/>
            <person name="Richardson D.L."/>
            <person name="Dodson R.J."/>
            <person name="Khalak H.G."/>
            <person name="Glodek A."/>
            <person name="McKenney K."/>
            <person name="FitzGerald L.M."/>
            <person name="Lee N."/>
            <person name="Adams M.D."/>
            <person name="Hickey E.K."/>
            <person name="Berg D.E."/>
            <person name="Gocayne J.D."/>
            <person name="Utterback T.R."/>
            <person name="Peterson J.D."/>
            <person name="Kelley J.M."/>
            <person name="Cotton M.D."/>
            <person name="Weidman J.F."/>
            <person name="Fujii C."/>
            <person name="Bowman C."/>
            <person name="Watthey L."/>
            <person name="Wallin E."/>
            <person name="Hayes W.S."/>
            <person name="Borodovsky M."/>
            <person name="Karp P.D."/>
            <person name="Smith H.O."/>
            <person name="Fraser C.M."/>
            <person name="Venter J.C."/>
        </authorList>
    </citation>
    <scope>NUCLEOTIDE SEQUENCE [LARGE SCALE GENOMIC DNA]</scope>
    <source>
        <strain>ATCC 700392 / 26695</strain>
    </source>
</reference>
<reference key="2">
    <citation type="journal article" date="2015" name="Nucleic Acids Res.">
        <title>Structure and primase-mediated activation of a bacterial dodecameric replicative helicase.</title>
        <authorList>
            <person name="Bazin A."/>
            <person name="Cherrier M.V."/>
            <person name="Gutsche I."/>
            <person name="Timmins J."/>
            <person name="Terradot L."/>
        </authorList>
    </citation>
    <scope>FUNCTION</scope>
    <scope>INTERACTION WITH DNAB</scope>
    <source>
        <strain>ATCC 700392 / 26695</strain>
    </source>
</reference>
<reference evidence="4" key="3">
    <citation type="journal article" date="2013" name="J. Bacteriol.">
        <title>Crystal structure and mode of helicase binding of the C-terminal domain of primase from Helicobacter pylori.</title>
        <authorList>
            <person name="Abdul Rehman S.A."/>
            <person name="Verma V."/>
            <person name="Mazumder M."/>
            <person name="Dhar S.K."/>
            <person name="Gourinath S."/>
        </authorList>
    </citation>
    <scope>X-RAY CRYSTALLOGRAPHY (1.78 ANGSTROMS) OF 413-559</scope>
    <scope>FUNCTION</scope>
    <scope>INTERACTION WITH DNAB</scope>
    <scope>MUTAGENESIS OF PHE-534</scope>
</reference>
<protein>
    <recommendedName>
        <fullName evidence="1">DNA primase</fullName>
        <ecNumber evidence="1">2.7.7.101</ecNumber>
    </recommendedName>
</protein>
<sequence>MILKSSIDRLLQTIDIVEVISSYVNLRKSGSSYMACCPFHEERSASFSVNQIKGFYHCFGCGASGDSIKFVMAFEKLSFVEALEKLAHRFNIVLEYDKGVYYDHKEDYHLLEMVSSLYQEELFNAPFFLNYLQKRGLSLESIKAFKLGLCTNRIDYGIENKGLNKDKLIELGVLGKSDNDQKTYLRFLDRIMFPIYSPSAQVVGFGGRTLKEKAAKYINSPQSKLFDKSSLLYGYHLAKEHIYKQKQVIVTEGYLDVILLHQAGFKNAIATLGTALTPSHLPLLKKGDPEILLSYDGDKAGRNAAYKASLMLAKEQRRGGVILFENNLDPADMIANGQIETLKNWLSHPMAFIEFVLRRMADSYLLDDPLEKDKALKEMLGFLKNFSLLLQSEYKPLIATLLQAPLHVLGIRERVSFQPFYPKTEKPNRPQRFAHVSSAPSLEFLEKLVIRYLLEDRSLLDLAVGYIHSGVFLHKKQEFDALCQEKLDDPKLVALLLDANLPLKKGGFEKELRLLILRYFERQLKEIPKSSLPFSEKMICLKKARQAIMKLKQGELVAI</sequence>
<evidence type="ECO:0000255" key="1">
    <source>
        <dbReference type="HAMAP-Rule" id="MF_00974"/>
    </source>
</evidence>
<evidence type="ECO:0000269" key="2">
    <source>
    </source>
</evidence>
<evidence type="ECO:0000269" key="3">
    <source>
    </source>
</evidence>
<evidence type="ECO:0007744" key="4">
    <source>
        <dbReference type="PDB" id="4EHS"/>
    </source>
</evidence>
<evidence type="ECO:0007829" key="5">
    <source>
        <dbReference type="PDB" id="4EHS"/>
    </source>
</evidence>